<comment type="function">
    <text evidence="1">Carrier of the growing fatty acid chain in fatty acid biosynthesis.</text>
</comment>
<comment type="pathway">
    <text>Lipid metabolism; fatty acid biosynthesis.</text>
</comment>
<comment type="subcellular location">
    <subcellularLocation>
        <location evidence="1">Cytoplasm</location>
    </subcellularLocation>
</comment>
<comment type="PTM">
    <text evidence="1">4'-phosphopantetheine is transferred from CoA to a specific serine of apo-ACP by AcpS. This modification is essential for activity because fatty acids are bound in thioester linkage to the sulfhydryl of the prosthetic group (By similarity).</text>
</comment>
<comment type="similarity">
    <text evidence="3">Belongs to the acyl carrier protein (ACP) family.</text>
</comment>
<name>ACP2_SHIFL</name>
<dbReference type="EMBL" id="AL391753">
    <property type="protein sequence ID" value="CAC05799.1"/>
    <property type="molecule type" value="Genomic_DNA"/>
</dbReference>
<dbReference type="EMBL" id="AF348706">
    <property type="protein sequence ID" value="AAK18442.1"/>
    <property type="molecule type" value="Genomic_DNA"/>
</dbReference>
<dbReference type="EMBL" id="AY206439">
    <property type="protein sequence ID" value="AAP78987.1"/>
    <property type="molecule type" value="Genomic_DNA"/>
</dbReference>
<dbReference type="EMBL" id="AF386526">
    <property type="protein sequence ID" value="AAL72552.1"/>
    <property type="molecule type" value="Genomic_DNA"/>
</dbReference>
<dbReference type="RefSeq" id="NP_085286.1">
    <property type="nucleotide sequence ID" value="NC_002698.1"/>
</dbReference>
<dbReference type="RefSeq" id="NP_858257.1">
    <property type="nucleotide sequence ID" value="NC_004851.1"/>
</dbReference>
<dbReference type="RefSeq" id="WP_000588812.1">
    <property type="nucleotide sequence ID" value="NZ_WHSI01000037.1"/>
</dbReference>
<dbReference type="RefSeq" id="YP_009062481.1">
    <property type="nucleotide sequence ID" value="NC_024996.1"/>
</dbReference>
<dbReference type="SMR" id="P0A199"/>
<dbReference type="PaxDb" id="198214-CP0124"/>
<dbReference type="GeneID" id="1238255"/>
<dbReference type="KEGG" id="sfl:CP0124"/>
<dbReference type="PATRIC" id="fig|198214.7.peg.5379"/>
<dbReference type="HOGENOM" id="CLU_108696_5_0_6"/>
<dbReference type="UniPathway" id="UPA00094"/>
<dbReference type="Proteomes" id="UP000001006">
    <property type="component" value="Plasmid pCP301"/>
</dbReference>
<dbReference type="GO" id="GO:0005737">
    <property type="term" value="C:cytoplasm"/>
    <property type="evidence" value="ECO:0007669"/>
    <property type="project" value="UniProtKB-SubCell"/>
</dbReference>
<dbReference type="GO" id="GO:0000036">
    <property type="term" value="F:acyl carrier activity"/>
    <property type="evidence" value="ECO:0007669"/>
    <property type="project" value="UniProtKB-UniRule"/>
</dbReference>
<dbReference type="Gene3D" id="1.10.1200.10">
    <property type="entry name" value="ACP-like"/>
    <property type="match status" value="1"/>
</dbReference>
<dbReference type="InterPro" id="IPR003231">
    <property type="entry name" value="ACP"/>
</dbReference>
<dbReference type="InterPro" id="IPR036736">
    <property type="entry name" value="ACP-like_sf"/>
</dbReference>
<dbReference type="InterPro" id="IPR009081">
    <property type="entry name" value="PP-bd_ACP"/>
</dbReference>
<dbReference type="Pfam" id="PF00550">
    <property type="entry name" value="PP-binding"/>
    <property type="match status" value="1"/>
</dbReference>
<dbReference type="SUPFAM" id="SSF47336">
    <property type="entry name" value="ACP-like"/>
    <property type="match status" value="1"/>
</dbReference>
<dbReference type="PROSITE" id="PS50075">
    <property type="entry name" value="CARRIER"/>
    <property type="match status" value="1"/>
</dbReference>
<geneLocation type="plasmid">
    <name>pWR100</name>
</geneLocation>
<geneLocation type="plasmid">
    <name>pWR501</name>
</geneLocation>
<geneLocation type="plasmid">
    <name>pINV_F6_M1382</name>
</geneLocation>
<geneLocation type="plasmid">
    <name>pCP301</name>
</geneLocation>
<keyword id="KW-0963">Cytoplasm</keyword>
<keyword id="KW-0275">Fatty acid biosynthesis</keyword>
<keyword id="KW-0276">Fatty acid metabolism</keyword>
<keyword id="KW-0444">Lipid biosynthesis</keyword>
<keyword id="KW-0443">Lipid metabolism</keyword>
<keyword id="KW-0596">Phosphopantetheine</keyword>
<keyword id="KW-0597">Phosphoprotein</keyword>
<keyword id="KW-0614">Plasmid</keyword>
<keyword id="KW-1185">Reference proteome</keyword>
<protein>
    <recommendedName>
        <fullName>Acyl carrier protein</fullName>
        <shortName>ACP</shortName>
    </recommendedName>
</protein>
<evidence type="ECO:0000250" key="1"/>
<evidence type="ECO:0000255" key="2">
    <source>
        <dbReference type="PROSITE-ProRule" id="PRU00258"/>
    </source>
</evidence>
<evidence type="ECO:0000305" key="3"/>
<proteinExistence type="inferred from homology"/>
<accession>P0A199</accession>
<accession>Q53972</accession>
<accession>Q8VSH9</accession>
<sequence>MIKEKILSIVAFCYGIAYSKLSEETKFIEDLSADSLSLIEMLDMISFEFNLRIDESALEHIITIGDLISVVKNSTKSI</sequence>
<gene>
    <name type="primary">acpP</name>
    <name type="synonym">acp</name>
    <name type="ordered locus">CP0124</name>
    <name type="ordered locus">S0132</name>
</gene>
<feature type="chain" id="PRO_0000180187" description="Acyl carrier protein">
    <location>
        <begin position="1"/>
        <end position="78"/>
    </location>
</feature>
<feature type="domain" description="Carrier" evidence="2">
    <location>
        <begin position="1"/>
        <end position="75"/>
    </location>
</feature>
<feature type="modified residue" description="O-(pantetheine 4'-phosphoryl)serine" evidence="2">
    <location>
        <position position="35"/>
    </location>
</feature>
<feature type="sequence variant" description="In plasmid pCP301.">
    <original>A</original>
    <variation>T</variation>
    <location>
        <position position="57"/>
    </location>
</feature>
<reference key="1">
    <citation type="journal article" date="2000" name="Mol. Microbiol.">
        <title>The virulence plasmid pWR100 and the repertoire of proteins secreted by the type III secretion apparatus of Shigella flexneri.</title>
        <authorList>
            <person name="Buchrieser C."/>
            <person name="Glaser P."/>
            <person name="Rusniok C."/>
            <person name="Nedjari H."/>
            <person name="d'Hauteville H."/>
            <person name="Kunst F."/>
            <person name="Sansonetti P.J."/>
            <person name="Parsot C."/>
        </authorList>
    </citation>
    <scope>NUCLEOTIDE SEQUENCE [GENOMIC DNA]</scope>
    <source>
        <strain>M90T / Serotype 5a</strain>
        <plasmid>pWR100</plasmid>
    </source>
</reference>
<reference key="2">
    <citation type="journal article" date="2001" name="Infect. Immun.">
        <title>Complete DNA sequence and analysis of the large virulence plasmid of Shigella flexneri.</title>
        <authorList>
            <person name="Venkatesan M.M."/>
            <person name="Goldberg M.B."/>
            <person name="Rose D.J."/>
            <person name="Grotbeck E.J."/>
            <person name="Burland V."/>
            <person name="Blattner F.R."/>
        </authorList>
    </citation>
    <scope>NUCLEOTIDE SEQUENCE [GENOMIC DNA]</scope>
    <source>
        <strain>M90T / Serotype 5a</strain>
        <plasmid>pWR501</plasmid>
    </source>
</reference>
<reference key="3">
    <citation type="journal article" date="2003" name="Infect. Immun.">
        <title>Comparison of two major forms of the Shigella virulence plasmid pINV: positive selection is a major force driving the divergence.</title>
        <authorList>
            <person name="Lan R."/>
            <person name="Stevenson G."/>
            <person name="Reeves P.R."/>
        </authorList>
    </citation>
    <scope>NUCLEOTIDE SEQUENCE [GENOMIC DNA]</scope>
    <source>
        <strain>M1382 / Serotype 6</strain>
        <plasmid>pINV_F6_M1382</plasmid>
    </source>
</reference>
<reference key="4">
    <citation type="journal article" date="2002" name="Nucleic Acids Res.">
        <title>Genome sequence of Shigella flexneri 2a: insights into pathogenicity through comparison with genomes of Escherichia coli K12 and O157.</title>
        <authorList>
            <person name="Jin Q."/>
            <person name="Yuan Z."/>
            <person name="Xu J."/>
            <person name="Wang Y."/>
            <person name="Shen Y."/>
            <person name="Lu W."/>
            <person name="Wang J."/>
            <person name="Liu H."/>
            <person name="Yang J."/>
            <person name="Yang F."/>
            <person name="Zhang X."/>
            <person name="Zhang J."/>
            <person name="Yang G."/>
            <person name="Wu H."/>
            <person name="Qu D."/>
            <person name="Dong J."/>
            <person name="Sun L."/>
            <person name="Xue Y."/>
            <person name="Zhao A."/>
            <person name="Gao Y."/>
            <person name="Zhu J."/>
            <person name="Kan B."/>
            <person name="Ding K."/>
            <person name="Chen S."/>
            <person name="Cheng H."/>
            <person name="Yao Z."/>
            <person name="He B."/>
            <person name="Chen R."/>
            <person name="Ma D."/>
            <person name="Qiang B."/>
            <person name="Wen Y."/>
            <person name="Hou Y."/>
            <person name="Yu J."/>
        </authorList>
    </citation>
    <scope>NUCLEOTIDE SEQUENCE [LARGE SCALE GENOMIC DNA]</scope>
    <source>
        <strain>301 / Serotype 2a</strain>
        <plasmid>pCP301</plasmid>
    </source>
</reference>
<organism>
    <name type="scientific">Shigella flexneri</name>
    <dbReference type="NCBI Taxonomy" id="623"/>
    <lineage>
        <taxon>Bacteria</taxon>
        <taxon>Pseudomonadati</taxon>
        <taxon>Pseudomonadota</taxon>
        <taxon>Gammaproteobacteria</taxon>
        <taxon>Enterobacterales</taxon>
        <taxon>Enterobacteriaceae</taxon>
        <taxon>Shigella</taxon>
    </lineage>
</organism>